<dbReference type="EC" id="4.2.1.44" evidence="1"/>
<dbReference type="EMBL" id="CP000001">
    <property type="protein sequence ID" value="AAU18002.1"/>
    <property type="molecule type" value="Genomic_DNA"/>
</dbReference>
<dbReference type="RefSeq" id="WP_000471994.1">
    <property type="nucleotide sequence ID" value="NC_006274.1"/>
</dbReference>
<dbReference type="SMR" id="Q63B72"/>
<dbReference type="KEGG" id="bcz:BCE33L2255"/>
<dbReference type="PATRIC" id="fig|288681.22.peg.3244"/>
<dbReference type="UniPathway" id="UPA00076">
    <property type="reaction ID" value="UER00144"/>
</dbReference>
<dbReference type="Proteomes" id="UP000002612">
    <property type="component" value="Chromosome"/>
</dbReference>
<dbReference type="GO" id="GO:0030145">
    <property type="term" value="F:manganese ion binding"/>
    <property type="evidence" value="ECO:0007669"/>
    <property type="project" value="UniProtKB-UniRule"/>
</dbReference>
<dbReference type="GO" id="GO:0050114">
    <property type="term" value="F:myo-inosose-2 dehydratase activity"/>
    <property type="evidence" value="ECO:0007669"/>
    <property type="project" value="UniProtKB-UniRule"/>
</dbReference>
<dbReference type="GO" id="GO:0019310">
    <property type="term" value="P:inositol catabolic process"/>
    <property type="evidence" value="ECO:0007669"/>
    <property type="project" value="UniProtKB-UniRule"/>
</dbReference>
<dbReference type="Gene3D" id="3.20.20.150">
    <property type="entry name" value="Divalent-metal-dependent TIM barrel enzymes"/>
    <property type="match status" value="1"/>
</dbReference>
<dbReference type="HAMAP" id="MF_01672">
    <property type="entry name" value="IolE"/>
    <property type="match status" value="1"/>
</dbReference>
<dbReference type="InterPro" id="IPR023952">
    <property type="entry name" value="IolE"/>
</dbReference>
<dbReference type="InterPro" id="IPR030823">
    <property type="entry name" value="IolE/MocC"/>
</dbReference>
<dbReference type="InterPro" id="IPR050312">
    <property type="entry name" value="IolE/XylAMocC-like"/>
</dbReference>
<dbReference type="InterPro" id="IPR036237">
    <property type="entry name" value="Xyl_isomerase-like_sf"/>
</dbReference>
<dbReference type="InterPro" id="IPR013022">
    <property type="entry name" value="Xyl_isomerase-like_TIM-brl"/>
</dbReference>
<dbReference type="NCBIfam" id="TIGR04379">
    <property type="entry name" value="myo_inos_iolE"/>
    <property type="match status" value="1"/>
</dbReference>
<dbReference type="PANTHER" id="PTHR12110">
    <property type="entry name" value="HYDROXYPYRUVATE ISOMERASE"/>
    <property type="match status" value="1"/>
</dbReference>
<dbReference type="PANTHER" id="PTHR12110:SF41">
    <property type="entry name" value="INOSOSE DEHYDRATASE"/>
    <property type="match status" value="1"/>
</dbReference>
<dbReference type="Pfam" id="PF01261">
    <property type="entry name" value="AP_endonuc_2"/>
    <property type="match status" value="1"/>
</dbReference>
<dbReference type="SUPFAM" id="SSF51658">
    <property type="entry name" value="Xylose isomerase-like"/>
    <property type="match status" value="1"/>
</dbReference>
<reference key="1">
    <citation type="journal article" date="2006" name="J. Bacteriol.">
        <title>Pathogenomic sequence analysis of Bacillus cereus and Bacillus thuringiensis isolates closely related to Bacillus anthracis.</title>
        <authorList>
            <person name="Han C.S."/>
            <person name="Xie G."/>
            <person name="Challacombe J.F."/>
            <person name="Altherr M.R."/>
            <person name="Bhotika S.S."/>
            <person name="Bruce D."/>
            <person name="Campbell C.S."/>
            <person name="Campbell M.L."/>
            <person name="Chen J."/>
            <person name="Chertkov O."/>
            <person name="Cleland C."/>
            <person name="Dimitrijevic M."/>
            <person name="Doggett N.A."/>
            <person name="Fawcett J.J."/>
            <person name="Glavina T."/>
            <person name="Goodwin L.A."/>
            <person name="Hill K.K."/>
            <person name="Hitchcock P."/>
            <person name="Jackson P.J."/>
            <person name="Keim P."/>
            <person name="Kewalramani A.R."/>
            <person name="Longmire J."/>
            <person name="Lucas S."/>
            <person name="Malfatti S."/>
            <person name="McMurry K."/>
            <person name="Meincke L.J."/>
            <person name="Misra M."/>
            <person name="Moseman B.L."/>
            <person name="Mundt M."/>
            <person name="Munk A.C."/>
            <person name="Okinaka R.T."/>
            <person name="Parson-Quintana B."/>
            <person name="Reilly L.P."/>
            <person name="Richardson P."/>
            <person name="Robinson D.L."/>
            <person name="Rubin E."/>
            <person name="Saunders E."/>
            <person name="Tapia R."/>
            <person name="Tesmer J.G."/>
            <person name="Thayer N."/>
            <person name="Thompson L.S."/>
            <person name="Tice H."/>
            <person name="Ticknor L.O."/>
            <person name="Wills P.L."/>
            <person name="Brettin T.S."/>
            <person name="Gilna P."/>
        </authorList>
    </citation>
    <scope>NUCLEOTIDE SEQUENCE [LARGE SCALE GENOMIC DNA]</scope>
    <source>
        <strain>ZK / E33L</strain>
    </source>
</reference>
<evidence type="ECO:0000255" key="1">
    <source>
        <dbReference type="HAMAP-Rule" id="MF_01672"/>
    </source>
</evidence>
<sequence>MFKENTVKLGIAPIAWTNDDMPELGAGNTFEQCISEMALAGFNGSEVGNKYPRNTVVLKKSLALRNLEIASAWFSTFLTTKPLEETVEEFIKHRDFLHDMGAKVIVVSEQGHSIQGLMDVPLFKNKPVFTEEEWNKLADGLHHLGKLAQEKGLHIVYHHHMGTGVQTTAEIEKLMDMTNPALVSLLFDTGHLVFSGEEPLYILKKYLPRIKHVHLKDIRQEVVDTVKENELSFLQAVKNGAFTVPGDGVIGFDEVFTILANSDYQGWFVVEAEQDPALANPFEYALKARKFIQEKAGL</sequence>
<name>IOLE1_BACCZ</name>
<organism>
    <name type="scientific">Bacillus cereus (strain ZK / E33L)</name>
    <dbReference type="NCBI Taxonomy" id="288681"/>
    <lineage>
        <taxon>Bacteria</taxon>
        <taxon>Bacillati</taxon>
        <taxon>Bacillota</taxon>
        <taxon>Bacilli</taxon>
        <taxon>Bacillales</taxon>
        <taxon>Bacillaceae</taxon>
        <taxon>Bacillus</taxon>
        <taxon>Bacillus cereus group</taxon>
    </lineage>
</organism>
<proteinExistence type="inferred from homology"/>
<keyword id="KW-0170">Cobalt</keyword>
<keyword id="KW-0456">Lyase</keyword>
<keyword id="KW-0464">Manganese</keyword>
<gene>
    <name evidence="1" type="primary">iolE1</name>
    <name type="ordered locus">BCE33L2255</name>
</gene>
<comment type="function">
    <text evidence="1">Catalyzes the dehydration of inosose (2-keto-myo-inositol, 2KMI or 2,4,6/3,5-pentahydroxycyclohexanone) to 3D-(3,5/4)-trihydroxycyclohexane-1,2-dione (D-2,3-diketo-4-deoxy-epi-inositol).</text>
</comment>
<comment type="catalytic activity">
    <reaction evidence="1">
        <text>scyllo-inosose = 3D-3,5/4-trihydroxycyclohexane-1,2-dione + H2O</text>
        <dbReference type="Rhea" id="RHEA:14065"/>
        <dbReference type="ChEBI" id="CHEBI:15377"/>
        <dbReference type="ChEBI" id="CHEBI:17811"/>
        <dbReference type="ChEBI" id="CHEBI:28446"/>
        <dbReference type="EC" id="4.2.1.44"/>
    </reaction>
</comment>
<comment type="cofactor">
    <cofactor evidence="1">
        <name>glutathione</name>
        <dbReference type="ChEBI" id="CHEBI:57925"/>
    </cofactor>
</comment>
<comment type="cofactor">
    <cofactor evidence="1">
        <name>Co(2+)</name>
        <dbReference type="ChEBI" id="CHEBI:48828"/>
    </cofactor>
    <cofactor evidence="1">
        <name>Mn(2+)</name>
        <dbReference type="ChEBI" id="CHEBI:29035"/>
    </cofactor>
</comment>
<comment type="pathway">
    <text evidence="1">Polyol metabolism; myo-inositol degradation into acetyl-CoA; acetyl-CoA from myo-inositol: step 2/7.</text>
</comment>
<comment type="similarity">
    <text evidence="1">Belongs to the IolE/MocC family.</text>
</comment>
<feature type="chain" id="PRO_0000352354" description="Inosose dehydratase 1">
    <location>
        <begin position="1"/>
        <end position="298"/>
    </location>
</feature>
<protein>
    <recommendedName>
        <fullName evidence="1">Inosose dehydratase 1</fullName>
        <ecNumber evidence="1">4.2.1.44</ecNumber>
    </recommendedName>
    <alternativeName>
        <fullName evidence="1">2-keto-myo-inositol dehydratase 1</fullName>
        <shortName evidence="1">2KMI dehydratase 1</shortName>
    </alternativeName>
</protein>
<accession>Q63B72</accession>